<evidence type="ECO:0000255" key="1">
    <source>
        <dbReference type="PROSITE-ProRule" id="PRU00042"/>
    </source>
</evidence>
<name>Z6B5_ENCCU</name>
<keyword id="KW-0479">Metal-binding</keyword>
<keyword id="KW-1185">Reference proteome</keyword>
<keyword id="KW-0677">Repeat</keyword>
<keyword id="KW-0862">Zinc</keyword>
<keyword id="KW-0863">Zinc-finger</keyword>
<organism>
    <name type="scientific">Encephalitozoon cuniculi (strain GB-M1)</name>
    <name type="common">Microsporidian parasite</name>
    <dbReference type="NCBI Taxonomy" id="284813"/>
    <lineage>
        <taxon>Eukaryota</taxon>
        <taxon>Fungi</taxon>
        <taxon>Fungi incertae sedis</taxon>
        <taxon>Microsporidia</taxon>
        <taxon>Unikaryonidae</taxon>
        <taxon>Encephalitozoon</taxon>
    </lineage>
</organism>
<proteinExistence type="predicted"/>
<gene>
    <name type="ordered locus">ECU06_1150</name>
</gene>
<sequence length="145" mass="17010">MRCEWEGCQEEIGDNVRGHLLSHIEKDEEARCLWKDCARYGEAQASKHALLAHARRHTGERPFECHLCGKDYTRSDPLKKHLLRHEAVDSKNENLIRKIEYLGQLLAEYRRESLRIMNDIESIRYNIQAMSRKIAYETKGNKSSL</sequence>
<reference key="1">
    <citation type="journal article" date="2001" name="Nature">
        <title>Genome sequence and gene compaction of the eukaryote parasite Encephalitozoon cuniculi.</title>
        <authorList>
            <person name="Katinka M.D."/>
            <person name="Duprat S."/>
            <person name="Cornillot E."/>
            <person name="Metenier G."/>
            <person name="Thomarat F."/>
            <person name="Prensier G."/>
            <person name="Barbe V."/>
            <person name="Peyretaillade E."/>
            <person name="Brottier P."/>
            <person name="Wincker P."/>
            <person name="Delbac F."/>
            <person name="El Alaoui H."/>
            <person name="Peyret P."/>
            <person name="Saurin W."/>
            <person name="Gouy M."/>
            <person name="Weissenbach J."/>
            <person name="Vivares C.P."/>
        </authorList>
    </citation>
    <scope>NUCLEOTIDE SEQUENCE [LARGE SCALE GENOMIC DNA]</scope>
    <source>
        <strain>GB-M1</strain>
    </source>
</reference>
<protein>
    <recommendedName>
        <fullName>Zinc finger C2H2 protein ECU06_1150</fullName>
    </recommendedName>
</protein>
<dbReference type="EMBL" id="AL590446">
    <property type="protein sequence ID" value="CAD25475.1"/>
    <property type="molecule type" value="Genomic_DNA"/>
</dbReference>
<dbReference type="RefSeq" id="NP_585871.1">
    <property type="nucleotide sequence ID" value="NM_001041493.1"/>
</dbReference>
<dbReference type="SMR" id="Q8SV95"/>
<dbReference type="STRING" id="284813.Q8SV95"/>
<dbReference type="GeneID" id="859296"/>
<dbReference type="KEGG" id="ecu:ECU06_1150"/>
<dbReference type="VEuPathDB" id="MicrosporidiaDB:ECU06_1150"/>
<dbReference type="HOGENOM" id="CLU_142390_0_0_1"/>
<dbReference type="InParanoid" id="Q8SV95"/>
<dbReference type="OMA" id="HEKADSY"/>
<dbReference type="OrthoDB" id="2188412at2759"/>
<dbReference type="Proteomes" id="UP000000819">
    <property type="component" value="Chromosome VI"/>
</dbReference>
<dbReference type="GO" id="GO:0005634">
    <property type="term" value="C:nucleus"/>
    <property type="evidence" value="ECO:0007669"/>
    <property type="project" value="UniProtKB-ARBA"/>
</dbReference>
<dbReference type="GO" id="GO:0000981">
    <property type="term" value="F:DNA-binding transcription factor activity, RNA polymerase II-specific"/>
    <property type="evidence" value="ECO:0007669"/>
    <property type="project" value="UniProtKB-ARBA"/>
</dbReference>
<dbReference type="GO" id="GO:0000976">
    <property type="term" value="F:transcription cis-regulatory region binding"/>
    <property type="evidence" value="ECO:0007669"/>
    <property type="project" value="UniProtKB-ARBA"/>
</dbReference>
<dbReference type="GO" id="GO:0008270">
    <property type="term" value="F:zinc ion binding"/>
    <property type="evidence" value="ECO:0007669"/>
    <property type="project" value="UniProtKB-KW"/>
</dbReference>
<dbReference type="GO" id="GO:0045944">
    <property type="term" value="P:positive regulation of transcription by RNA polymerase II"/>
    <property type="evidence" value="ECO:0007669"/>
    <property type="project" value="UniProtKB-ARBA"/>
</dbReference>
<dbReference type="FunFam" id="3.30.160.60:FF:000100">
    <property type="entry name" value="Zinc finger 45-like"/>
    <property type="match status" value="1"/>
</dbReference>
<dbReference type="Gene3D" id="3.30.160.60">
    <property type="entry name" value="Classic Zinc Finger"/>
    <property type="match status" value="2"/>
</dbReference>
<dbReference type="InterPro" id="IPR050329">
    <property type="entry name" value="GLI_C2H2-zinc-finger"/>
</dbReference>
<dbReference type="InterPro" id="IPR056436">
    <property type="entry name" value="Znf-C2H2_ZIC1-5/GLI1-3-like"/>
</dbReference>
<dbReference type="InterPro" id="IPR036236">
    <property type="entry name" value="Znf_C2H2_sf"/>
</dbReference>
<dbReference type="InterPro" id="IPR013087">
    <property type="entry name" value="Znf_C2H2_type"/>
</dbReference>
<dbReference type="PANTHER" id="PTHR19818:SF137">
    <property type="entry name" value="INO80 COMPLEX SUBUNIT 1"/>
    <property type="match status" value="1"/>
</dbReference>
<dbReference type="PANTHER" id="PTHR19818">
    <property type="entry name" value="ZINC FINGER PROTEIN ZIC AND GLI"/>
    <property type="match status" value="1"/>
</dbReference>
<dbReference type="Pfam" id="PF23561">
    <property type="entry name" value="zf-C2H2_15"/>
    <property type="match status" value="1"/>
</dbReference>
<dbReference type="SUPFAM" id="SSF57667">
    <property type="entry name" value="beta-beta-alpha zinc fingers"/>
    <property type="match status" value="1"/>
</dbReference>
<dbReference type="PROSITE" id="PS00028">
    <property type="entry name" value="ZINC_FINGER_C2H2_1"/>
    <property type="match status" value="1"/>
</dbReference>
<dbReference type="PROSITE" id="PS50157">
    <property type="entry name" value="ZINC_FINGER_C2H2_2"/>
    <property type="match status" value="2"/>
</dbReference>
<feature type="chain" id="PRO_0000047829" description="Zinc finger C2H2 protein ECU06_1150">
    <location>
        <begin position="1"/>
        <end position="145"/>
    </location>
</feature>
<feature type="zinc finger region" description="C2H2-type 1; atypical" evidence="1">
    <location>
        <begin position="35"/>
        <end position="57"/>
    </location>
</feature>
<feature type="zinc finger region" description="C2H2-type 2" evidence="1">
    <location>
        <begin position="63"/>
        <end position="85"/>
    </location>
</feature>
<accession>Q8SV95</accession>